<feature type="chain" id="PRO_0000417585" description="LIM zinc-binding domain-containing Nebulette">
    <location>
        <begin position="1"/>
        <end position="270"/>
    </location>
</feature>
<feature type="domain" description="LIM zinc-binding" evidence="2">
    <location>
        <begin position="3"/>
        <end position="63"/>
    </location>
</feature>
<feature type="repeat" description="Nebulin 1">
    <location>
        <begin position="61"/>
        <end position="95"/>
    </location>
</feature>
<feature type="repeat" description="Nebulin 2">
    <location>
        <begin position="97"/>
        <end position="131"/>
    </location>
</feature>
<feature type="repeat" description="Nebulin 3">
    <location>
        <begin position="133"/>
        <end position="159"/>
    </location>
</feature>
<feature type="domain" description="SH3" evidence="3">
    <location>
        <begin position="210"/>
        <end position="270"/>
    </location>
</feature>
<feature type="modified residue" description="Omega-N-methylarginine" evidence="5">
    <location>
        <position position="96"/>
    </location>
</feature>
<feature type="modified residue" description="Omega-N-methylarginine" evidence="5">
    <location>
        <position position="132"/>
    </location>
</feature>
<feature type="modified residue" description="Phosphothreonine" evidence="4">
    <location>
        <position position="135"/>
    </location>
</feature>
<feature type="modified residue" description="Phosphoserine" evidence="4">
    <location>
        <position position="230"/>
    </location>
</feature>
<comment type="function">
    <text evidence="1">Binds to actin and plays an important role in the assembly of the Z-disk. Isoform 2 might play a role in the assembly of focal adhesion (By similarity).</text>
</comment>
<comment type="subcellular location">
    <molecule>Isoform 2</molecule>
    <subcellularLocation>
        <location evidence="1">Cytoplasm</location>
    </subcellularLocation>
</comment>
<comment type="alternative products">
    <event type="alternative splicing"/>
    <isoform>
        <id>Q9DC07-1</id>
        <name>2</name>
        <name>LIM-Nebulette</name>
        <name>LIM-NBEL</name>
        <name>LNBEL</name>
        <sequence type="displayed"/>
    </isoform>
    <isoform>
        <id>Q0II04-1</id>
        <name>1</name>
        <sequence type="external"/>
    </isoform>
    <text>Additional isoforms exist.</text>
</comment>
<organism>
    <name type="scientific">Mus musculus</name>
    <name type="common">Mouse</name>
    <dbReference type="NCBI Taxonomy" id="10090"/>
    <lineage>
        <taxon>Eukaryota</taxon>
        <taxon>Metazoa</taxon>
        <taxon>Chordata</taxon>
        <taxon>Craniata</taxon>
        <taxon>Vertebrata</taxon>
        <taxon>Euteleostomi</taxon>
        <taxon>Mammalia</taxon>
        <taxon>Eutheria</taxon>
        <taxon>Euarchontoglires</taxon>
        <taxon>Glires</taxon>
        <taxon>Rodentia</taxon>
        <taxon>Myomorpha</taxon>
        <taxon>Muroidea</taxon>
        <taxon>Muridae</taxon>
        <taxon>Murinae</taxon>
        <taxon>Mus</taxon>
        <taxon>Mus</taxon>
    </lineage>
</organism>
<proteinExistence type="evidence at protein level"/>
<protein>
    <recommendedName>
        <fullName>LIM zinc-binding domain-containing Nebulette</fullName>
    </recommendedName>
    <alternativeName>
        <fullName>Actin-binding Z-disk protein</fullName>
    </alternativeName>
</protein>
<gene>
    <name type="primary">Nebl</name>
    <name type="synonym">Lnebl</name>
</gene>
<reference key="1">
    <citation type="journal article" date="2005" name="Science">
        <title>The transcriptional landscape of the mammalian genome.</title>
        <authorList>
            <person name="Carninci P."/>
            <person name="Kasukawa T."/>
            <person name="Katayama S."/>
            <person name="Gough J."/>
            <person name="Frith M.C."/>
            <person name="Maeda N."/>
            <person name="Oyama R."/>
            <person name="Ravasi T."/>
            <person name="Lenhard B."/>
            <person name="Wells C."/>
            <person name="Kodzius R."/>
            <person name="Shimokawa K."/>
            <person name="Bajic V.B."/>
            <person name="Brenner S.E."/>
            <person name="Batalov S."/>
            <person name="Forrest A.R."/>
            <person name="Zavolan M."/>
            <person name="Davis M.J."/>
            <person name="Wilming L.G."/>
            <person name="Aidinis V."/>
            <person name="Allen J.E."/>
            <person name="Ambesi-Impiombato A."/>
            <person name="Apweiler R."/>
            <person name="Aturaliya R.N."/>
            <person name="Bailey T.L."/>
            <person name="Bansal M."/>
            <person name="Baxter L."/>
            <person name="Beisel K.W."/>
            <person name="Bersano T."/>
            <person name="Bono H."/>
            <person name="Chalk A.M."/>
            <person name="Chiu K.P."/>
            <person name="Choudhary V."/>
            <person name="Christoffels A."/>
            <person name="Clutterbuck D.R."/>
            <person name="Crowe M.L."/>
            <person name="Dalla E."/>
            <person name="Dalrymple B.P."/>
            <person name="de Bono B."/>
            <person name="Della Gatta G."/>
            <person name="di Bernardo D."/>
            <person name="Down T."/>
            <person name="Engstrom P."/>
            <person name="Fagiolini M."/>
            <person name="Faulkner G."/>
            <person name="Fletcher C.F."/>
            <person name="Fukushima T."/>
            <person name="Furuno M."/>
            <person name="Futaki S."/>
            <person name="Gariboldi M."/>
            <person name="Georgii-Hemming P."/>
            <person name="Gingeras T.R."/>
            <person name="Gojobori T."/>
            <person name="Green R.E."/>
            <person name="Gustincich S."/>
            <person name="Harbers M."/>
            <person name="Hayashi Y."/>
            <person name="Hensch T.K."/>
            <person name="Hirokawa N."/>
            <person name="Hill D."/>
            <person name="Huminiecki L."/>
            <person name="Iacono M."/>
            <person name="Ikeo K."/>
            <person name="Iwama A."/>
            <person name="Ishikawa T."/>
            <person name="Jakt M."/>
            <person name="Kanapin A."/>
            <person name="Katoh M."/>
            <person name="Kawasawa Y."/>
            <person name="Kelso J."/>
            <person name="Kitamura H."/>
            <person name="Kitano H."/>
            <person name="Kollias G."/>
            <person name="Krishnan S.P."/>
            <person name="Kruger A."/>
            <person name="Kummerfeld S.K."/>
            <person name="Kurochkin I.V."/>
            <person name="Lareau L.F."/>
            <person name="Lazarevic D."/>
            <person name="Lipovich L."/>
            <person name="Liu J."/>
            <person name="Liuni S."/>
            <person name="McWilliam S."/>
            <person name="Madan Babu M."/>
            <person name="Madera M."/>
            <person name="Marchionni L."/>
            <person name="Matsuda H."/>
            <person name="Matsuzawa S."/>
            <person name="Miki H."/>
            <person name="Mignone F."/>
            <person name="Miyake S."/>
            <person name="Morris K."/>
            <person name="Mottagui-Tabar S."/>
            <person name="Mulder N."/>
            <person name="Nakano N."/>
            <person name="Nakauchi H."/>
            <person name="Ng P."/>
            <person name="Nilsson R."/>
            <person name="Nishiguchi S."/>
            <person name="Nishikawa S."/>
            <person name="Nori F."/>
            <person name="Ohara O."/>
            <person name="Okazaki Y."/>
            <person name="Orlando V."/>
            <person name="Pang K.C."/>
            <person name="Pavan W.J."/>
            <person name="Pavesi G."/>
            <person name="Pesole G."/>
            <person name="Petrovsky N."/>
            <person name="Piazza S."/>
            <person name="Reed J."/>
            <person name="Reid J.F."/>
            <person name="Ring B.Z."/>
            <person name="Ringwald M."/>
            <person name="Rost B."/>
            <person name="Ruan Y."/>
            <person name="Salzberg S.L."/>
            <person name="Sandelin A."/>
            <person name="Schneider C."/>
            <person name="Schoenbach C."/>
            <person name="Sekiguchi K."/>
            <person name="Semple C.A."/>
            <person name="Seno S."/>
            <person name="Sessa L."/>
            <person name="Sheng Y."/>
            <person name="Shibata Y."/>
            <person name="Shimada H."/>
            <person name="Shimada K."/>
            <person name="Silva D."/>
            <person name="Sinclair B."/>
            <person name="Sperling S."/>
            <person name="Stupka E."/>
            <person name="Sugiura K."/>
            <person name="Sultana R."/>
            <person name="Takenaka Y."/>
            <person name="Taki K."/>
            <person name="Tammoja K."/>
            <person name="Tan S.L."/>
            <person name="Tang S."/>
            <person name="Taylor M.S."/>
            <person name="Tegner J."/>
            <person name="Teichmann S.A."/>
            <person name="Ueda H.R."/>
            <person name="van Nimwegen E."/>
            <person name="Verardo R."/>
            <person name="Wei C.L."/>
            <person name="Yagi K."/>
            <person name="Yamanishi H."/>
            <person name="Zabarovsky E."/>
            <person name="Zhu S."/>
            <person name="Zimmer A."/>
            <person name="Hide W."/>
            <person name="Bult C."/>
            <person name="Grimmond S.M."/>
            <person name="Teasdale R.D."/>
            <person name="Liu E.T."/>
            <person name="Brusic V."/>
            <person name="Quackenbush J."/>
            <person name="Wahlestedt C."/>
            <person name="Mattick J.S."/>
            <person name="Hume D.A."/>
            <person name="Kai C."/>
            <person name="Sasaki D."/>
            <person name="Tomaru Y."/>
            <person name="Fukuda S."/>
            <person name="Kanamori-Katayama M."/>
            <person name="Suzuki M."/>
            <person name="Aoki J."/>
            <person name="Arakawa T."/>
            <person name="Iida J."/>
            <person name="Imamura K."/>
            <person name="Itoh M."/>
            <person name="Kato T."/>
            <person name="Kawaji H."/>
            <person name="Kawagashira N."/>
            <person name="Kawashima T."/>
            <person name="Kojima M."/>
            <person name="Kondo S."/>
            <person name="Konno H."/>
            <person name="Nakano K."/>
            <person name="Ninomiya N."/>
            <person name="Nishio T."/>
            <person name="Okada M."/>
            <person name="Plessy C."/>
            <person name="Shibata K."/>
            <person name="Shiraki T."/>
            <person name="Suzuki S."/>
            <person name="Tagami M."/>
            <person name="Waki K."/>
            <person name="Watahiki A."/>
            <person name="Okamura-Oho Y."/>
            <person name="Suzuki H."/>
            <person name="Kawai J."/>
            <person name="Hayashizaki Y."/>
        </authorList>
    </citation>
    <scope>NUCLEOTIDE SEQUENCE [LARGE SCALE MRNA] (ISOFORM 2)</scope>
</reference>
<reference key="2">
    <citation type="journal article" date="2009" name="PLoS Biol.">
        <title>Lineage-specific biology revealed by a finished genome assembly of the mouse.</title>
        <authorList>
            <person name="Church D.M."/>
            <person name="Goodstadt L."/>
            <person name="Hillier L.W."/>
            <person name="Zody M.C."/>
            <person name="Goldstein S."/>
            <person name="She X."/>
            <person name="Bult C.J."/>
            <person name="Agarwala R."/>
            <person name="Cherry J.L."/>
            <person name="DiCuccio M."/>
            <person name="Hlavina W."/>
            <person name="Kapustin Y."/>
            <person name="Meric P."/>
            <person name="Maglott D."/>
            <person name="Birtle Z."/>
            <person name="Marques A.C."/>
            <person name="Graves T."/>
            <person name="Zhou S."/>
            <person name="Teague B."/>
            <person name="Potamousis K."/>
            <person name="Churas C."/>
            <person name="Place M."/>
            <person name="Herschleb J."/>
            <person name="Runnheim R."/>
            <person name="Forrest D."/>
            <person name="Amos-Landgraf J."/>
            <person name="Schwartz D.C."/>
            <person name="Cheng Z."/>
            <person name="Lindblad-Toh K."/>
            <person name="Eichler E.E."/>
            <person name="Ponting C.P."/>
        </authorList>
    </citation>
    <scope>NUCLEOTIDE SEQUENCE [LARGE SCALE GENOMIC DNA]</scope>
    <source>
        <strain>C57BL/6J</strain>
    </source>
</reference>
<reference key="3">
    <citation type="submission" date="2005-07" db="EMBL/GenBank/DDBJ databases">
        <authorList>
            <person name="Mural R.J."/>
            <person name="Adams M.D."/>
            <person name="Myers E.W."/>
            <person name="Smith H.O."/>
            <person name="Venter J.C."/>
        </authorList>
    </citation>
    <scope>NUCLEOTIDE SEQUENCE [LARGE SCALE GENOMIC DNA]</scope>
</reference>
<reference key="4">
    <citation type="journal article" date="2004" name="Genome Res.">
        <title>The status, quality, and expansion of the NIH full-length cDNA project: the Mammalian Gene Collection (MGC).</title>
        <authorList>
            <consortium name="The MGC Project Team"/>
        </authorList>
    </citation>
    <scope>NUCLEOTIDE SEQUENCE [LARGE SCALE MRNA] (ISOFORM 2)</scope>
    <source>
        <tissue>Mammary tumor</tissue>
    </source>
</reference>
<reference key="5">
    <citation type="journal article" date="2004" name="J. Biol. Chem.">
        <title>Zyxin interacts with the SH3 domains of the cytoskeletal proteins LIM-nebulette and Lasp-1.</title>
        <authorList>
            <person name="Li B."/>
            <person name="Zhuang L."/>
            <person name="Trueb B."/>
        </authorList>
    </citation>
    <scope>IDENTIFICATION (ISOFORM 2)</scope>
    <source>
        <tissue>Placenta</tissue>
    </source>
</reference>
<reference key="6">
    <citation type="journal article" date="2010" name="Cell">
        <title>A tissue-specific atlas of mouse protein phosphorylation and expression.</title>
        <authorList>
            <person name="Huttlin E.L."/>
            <person name="Jedrychowski M.P."/>
            <person name="Elias J.E."/>
            <person name="Goswami T."/>
            <person name="Rad R."/>
            <person name="Beausoleil S.A."/>
            <person name="Villen J."/>
            <person name="Haas W."/>
            <person name="Sowa M.E."/>
            <person name="Gygi S.P."/>
        </authorList>
    </citation>
    <scope>PHOSPHORYLATION [LARGE SCALE ANALYSIS] AT THR-135 AND SER-230</scope>
    <scope>IDENTIFICATION BY MASS SPECTROMETRY [LARGE SCALE ANALYSIS]</scope>
    <source>
        <tissue>Brain</tissue>
        <tissue>Heart</tissue>
        <tissue>Lung</tissue>
    </source>
</reference>
<reference key="7">
    <citation type="journal article" date="2014" name="Mol. Cell. Proteomics">
        <title>Immunoaffinity enrichment and mass spectrometry analysis of protein methylation.</title>
        <authorList>
            <person name="Guo A."/>
            <person name="Gu H."/>
            <person name="Zhou J."/>
            <person name="Mulhern D."/>
            <person name="Wang Y."/>
            <person name="Lee K.A."/>
            <person name="Yang V."/>
            <person name="Aguiar M."/>
            <person name="Kornhauser J."/>
            <person name="Jia X."/>
            <person name="Ren J."/>
            <person name="Beausoleil S.A."/>
            <person name="Silva J.C."/>
            <person name="Vemulapalli V."/>
            <person name="Bedford M.T."/>
            <person name="Comb M.J."/>
        </authorList>
    </citation>
    <scope>METHYLATION [LARGE SCALE ANALYSIS] AT ARG-96 AND ARG-132</scope>
    <scope>IDENTIFICATION BY MASS SPECTROMETRY [LARGE SCALE ANALYSIS]</scope>
    <source>
        <tissue>Brain</tissue>
        <tissue>Embryo</tissue>
    </source>
</reference>
<sequence length="270" mass="31113">MNPQCARCGKVVYPTEKVNCLDKYWHKGCFHCEVCKMALNMNNYKGYEKKPYCNAHYPKQSFTTVADTPENLRLKQQSELQSQVKYKRDFEESKGRGFSIVTDTPELQRLKRTQEQISNVKYHEDFEKTKGRGFTPVVDDPVTERVRKSTQVVSDAAYKGVQPHVVEMDRRPGIIVAPVLPGAYQQSHSQGYGYMHQTSVSSMRSMQPPAHLRTYRAMYDYSAQDEDEVSFRDGDYIVNVQPIDDGWMYGTVQRTGRTGMLPANYIEFVN</sequence>
<evidence type="ECO:0000250" key="1"/>
<evidence type="ECO:0000255" key="2">
    <source>
        <dbReference type="PROSITE-ProRule" id="PRU00125"/>
    </source>
</evidence>
<evidence type="ECO:0000255" key="3">
    <source>
        <dbReference type="PROSITE-ProRule" id="PRU00192"/>
    </source>
</evidence>
<evidence type="ECO:0007744" key="4">
    <source>
    </source>
</evidence>
<evidence type="ECO:0007744" key="5">
    <source>
    </source>
</evidence>
<dbReference type="EMBL" id="AK004645">
    <property type="protein sequence ID" value="BAB23436.1"/>
    <property type="molecule type" value="mRNA"/>
</dbReference>
<dbReference type="EMBL" id="AL935297">
    <property type="status" value="NOT_ANNOTATED_CDS"/>
    <property type="molecule type" value="Genomic_DNA"/>
</dbReference>
<dbReference type="EMBL" id="AL772218">
    <property type="status" value="NOT_ANNOTATED_CDS"/>
    <property type="molecule type" value="Genomic_DNA"/>
</dbReference>
<dbReference type="EMBL" id="AL845498">
    <property type="status" value="NOT_ANNOTATED_CDS"/>
    <property type="molecule type" value="Genomic_DNA"/>
</dbReference>
<dbReference type="EMBL" id="AL954131">
    <property type="status" value="NOT_ANNOTATED_CDS"/>
    <property type="molecule type" value="Genomic_DNA"/>
</dbReference>
<dbReference type="EMBL" id="CH466542">
    <property type="protein sequence ID" value="EDL08088.1"/>
    <property type="molecule type" value="Genomic_DNA"/>
</dbReference>
<dbReference type="EMBL" id="BC025863">
    <property type="protein sequence ID" value="AAH25863.1"/>
    <property type="molecule type" value="mRNA"/>
</dbReference>
<dbReference type="CCDS" id="CCDS15706.1">
    <molecule id="Q9DC07-1"/>
</dbReference>
<dbReference type="RefSeq" id="NP_083033.1">
    <molecule id="Q9DC07-1"/>
    <property type="nucleotide sequence ID" value="NM_028757.3"/>
</dbReference>
<dbReference type="SMR" id="Q9DC07"/>
<dbReference type="BioGRID" id="216494">
    <property type="interactions" value="4"/>
</dbReference>
<dbReference type="STRING" id="10090.ENSMUSP00000028080"/>
<dbReference type="iPTMnet" id="Q9DC07"/>
<dbReference type="SwissPalm" id="Q9DC07"/>
<dbReference type="jPOST" id="Q9DC07"/>
<dbReference type="PeptideAtlas" id="Q9DC07"/>
<dbReference type="ProteomicsDB" id="252483">
    <molecule id="Q9DC07-1"/>
</dbReference>
<dbReference type="Antibodypedia" id="2823">
    <property type="antibodies" value="75 antibodies from 18 providers"/>
</dbReference>
<dbReference type="DNASU" id="74103"/>
<dbReference type="Ensembl" id="ENSMUST00000028080.12">
    <molecule id="Q9DC07-1"/>
    <property type="protein sequence ID" value="ENSMUSP00000028080.5"/>
    <property type="gene ID" value="ENSMUSG00000053702.17"/>
</dbReference>
<dbReference type="GeneID" id="74103"/>
<dbReference type="KEGG" id="mmu:74103"/>
<dbReference type="UCSC" id="uc008ila.1">
    <molecule id="Q9DC07-1"/>
    <property type="organism name" value="mouse"/>
</dbReference>
<dbReference type="AGR" id="MGI:1921353"/>
<dbReference type="CTD" id="10529"/>
<dbReference type="MGI" id="MGI:1921353">
    <property type="gene designation" value="Nebl"/>
</dbReference>
<dbReference type="VEuPathDB" id="HostDB:ENSMUSG00000053702"/>
<dbReference type="GeneTree" id="ENSGT00940000156390"/>
<dbReference type="HOGENOM" id="CLU_026811_0_1_1"/>
<dbReference type="OMA" id="CEAHYPK"/>
<dbReference type="PhylomeDB" id="Q9DC07"/>
<dbReference type="BioGRID-ORCS" id="74103">
    <property type="hits" value="3 hits in 77 CRISPR screens"/>
</dbReference>
<dbReference type="ChiTaRS" id="Nebl">
    <property type="organism name" value="mouse"/>
</dbReference>
<dbReference type="Proteomes" id="UP000000589">
    <property type="component" value="Chromosome 2"/>
</dbReference>
<dbReference type="Bgee" id="ENSMUSG00000053702">
    <property type="expression patterns" value="Expressed in interventricular septum and 198 other cell types or tissues"/>
</dbReference>
<dbReference type="ExpressionAtlas" id="Q9DC07">
    <property type="expression patterns" value="baseline and differential"/>
</dbReference>
<dbReference type="GO" id="GO:0005737">
    <property type="term" value="C:cytoplasm"/>
    <property type="evidence" value="ECO:0007669"/>
    <property type="project" value="UniProtKB-SubCell"/>
</dbReference>
<dbReference type="GO" id="GO:0003779">
    <property type="term" value="F:actin binding"/>
    <property type="evidence" value="ECO:0007669"/>
    <property type="project" value="UniProtKB-KW"/>
</dbReference>
<dbReference type="GO" id="GO:0046872">
    <property type="term" value="F:metal ion binding"/>
    <property type="evidence" value="ECO:0007669"/>
    <property type="project" value="UniProtKB-KW"/>
</dbReference>
<dbReference type="CDD" id="cd09447">
    <property type="entry name" value="LIM_LASP"/>
    <property type="match status" value="1"/>
</dbReference>
<dbReference type="CDD" id="cd11935">
    <property type="entry name" value="SH3_Nebulette_C"/>
    <property type="match status" value="1"/>
</dbReference>
<dbReference type="FunFam" id="2.10.110.10:FF:000087">
    <property type="entry name" value="LIM zinc-binding domain-containing Nebulette"/>
    <property type="match status" value="1"/>
</dbReference>
<dbReference type="FunFam" id="2.30.30.40:FF:000007">
    <property type="entry name" value="nebulin isoform X1"/>
    <property type="match status" value="1"/>
</dbReference>
<dbReference type="Gene3D" id="2.10.110.10">
    <property type="entry name" value="Cysteine Rich Protein"/>
    <property type="match status" value="1"/>
</dbReference>
<dbReference type="Gene3D" id="2.30.30.40">
    <property type="entry name" value="SH3 Domains"/>
    <property type="match status" value="1"/>
</dbReference>
<dbReference type="InterPro" id="IPR051759">
    <property type="entry name" value="LIM-SH3_domain_protein"/>
</dbReference>
<dbReference type="InterPro" id="IPR035631">
    <property type="entry name" value="Nebulette_SH3"/>
</dbReference>
<dbReference type="InterPro" id="IPR000900">
    <property type="entry name" value="Nebulin_repeat"/>
</dbReference>
<dbReference type="InterPro" id="IPR036028">
    <property type="entry name" value="SH3-like_dom_sf"/>
</dbReference>
<dbReference type="InterPro" id="IPR001452">
    <property type="entry name" value="SH3_domain"/>
</dbReference>
<dbReference type="InterPro" id="IPR001781">
    <property type="entry name" value="Znf_LIM"/>
</dbReference>
<dbReference type="PANTHER" id="PTHR46218">
    <property type="entry name" value="LASP"/>
    <property type="match status" value="1"/>
</dbReference>
<dbReference type="PANTHER" id="PTHR46218:SF4">
    <property type="entry name" value="LIM AND SH3 DOMAIN PROTEIN LASP"/>
    <property type="match status" value="1"/>
</dbReference>
<dbReference type="Pfam" id="PF00412">
    <property type="entry name" value="LIM"/>
    <property type="match status" value="1"/>
</dbReference>
<dbReference type="Pfam" id="PF00880">
    <property type="entry name" value="Nebulin"/>
    <property type="match status" value="2"/>
</dbReference>
<dbReference type="Pfam" id="PF14604">
    <property type="entry name" value="SH3_9"/>
    <property type="match status" value="1"/>
</dbReference>
<dbReference type="PRINTS" id="PR00452">
    <property type="entry name" value="SH3DOMAIN"/>
</dbReference>
<dbReference type="SMART" id="SM00132">
    <property type="entry name" value="LIM"/>
    <property type="match status" value="1"/>
</dbReference>
<dbReference type="SMART" id="SM00227">
    <property type="entry name" value="NEBU"/>
    <property type="match status" value="3"/>
</dbReference>
<dbReference type="SMART" id="SM00326">
    <property type="entry name" value="SH3"/>
    <property type="match status" value="1"/>
</dbReference>
<dbReference type="SUPFAM" id="SSF57716">
    <property type="entry name" value="Glucocorticoid receptor-like (DNA-binding domain)"/>
    <property type="match status" value="1"/>
</dbReference>
<dbReference type="SUPFAM" id="SSF50044">
    <property type="entry name" value="SH3-domain"/>
    <property type="match status" value="1"/>
</dbReference>
<dbReference type="PROSITE" id="PS00478">
    <property type="entry name" value="LIM_DOMAIN_1"/>
    <property type="match status" value="1"/>
</dbReference>
<dbReference type="PROSITE" id="PS50023">
    <property type="entry name" value="LIM_DOMAIN_2"/>
    <property type="match status" value="1"/>
</dbReference>
<dbReference type="PROSITE" id="PS51216">
    <property type="entry name" value="NEBULIN"/>
    <property type="match status" value="3"/>
</dbReference>
<dbReference type="PROSITE" id="PS50002">
    <property type="entry name" value="SH3"/>
    <property type="match status" value="1"/>
</dbReference>
<keyword id="KW-0009">Actin-binding</keyword>
<keyword id="KW-0025">Alternative splicing</keyword>
<keyword id="KW-0963">Cytoplasm</keyword>
<keyword id="KW-0440">LIM domain</keyword>
<keyword id="KW-0479">Metal-binding</keyword>
<keyword id="KW-0488">Methylation</keyword>
<keyword id="KW-0597">Phosphoprotein</keyword>
<keyword id="KW-1185">Reference proteome</keyword>
<keyword id="KW-0677">Repeat</keyword>
<keyword id="KW-0728">SH3 domain</keyword>
<keyword id="KW-0862">Zinc</keyword>
<name>LNEBL_MOUSE</name>
<accession>Q9DC07</accession>